<keyword id="KW-0878">Amphibian defense peptide</keyword>
<keyword id="KW-0044">Antibiotic</keyword>
<keyword id="KW-0929">Antimicrobial</keyword>
<keyword id="KW-0165">Cleavage on pair of basic residues</keyword>
<keyword id="KW-0204">Cytolysis</keyword>
<keyword id="KW-1015">Disulfide bond</keyword>
<keyword id="KW-0354">Hemolysis</keyword>
<keyword id="KW-0964">Secreted</keyword>
<keyword id="KW-0732">Signal</keyword>
<reference evidence="6" key="1">
    <citation type="journal article" date="2013" name="Biochimie">
        <title>Identification of multiple antimicrobial peptides from the skin of fine-spined frog, Hylarana spinulosa (Ranidae).</title>
        <authorList>
            <person name="Yang X."/>
            <person name="Hu Y."/>
            <person name="Xu S."/>
            <person name="Hu Y."/>
            <person name="Meng H."/>
            <person name="Guo C."/>
            <person name="Liu Y."/>
            <person name="Liu J."/>
            <person name="Yu Z."/>
            <person name="Wang H."/>
        </authorList>
    </citation>
    <scope>NUCLEOTIDE SEQUENCE [MRNA]</scope>
    <scope>FUNCTION</scope>
    <scope>SYNTHESIS</scope>
    <source>
        <tissue evidence="4">Skin</tissue>
    </source>
</reference>
<proteinExistence type="inferred from homology"/>
<evidence type="ECO:0000250" key="1">
    <source>
        <dbReference type="UniProtKB" id="A7WNV6"/>
    </source>
</evidence>
<evidence type="ECO:0000255" key="2"/>
<evidence type="ECO:0000269" key="3">
    <source>
    </source>
</evidence>
<evidence type="ECO:0000303" key="4">
    <source>
    </source>
</evidence>
<evidence type="ECO:0000305" key="5">
    <source>
    </source>
</evidence>
<evidence type="ECO:0000312" key="6">
    <source>
        <dbReference type="EMBL" id="ADV36189.1"/>
    </source>
</evidence>
<comment type="function">
    <text evidence="3">Antimicrobial peptide. Weakly active against P.faecalis X29. Not active against fungi. Shows very weak hemolytic activity against human erythrocytes.</text>
</comment>
<comment type="subcellular location">
    <subcellularLocation>
        <location evidence="5">Secreted</location>
    </subcellularLocation>
</comment>
<comment type="tissue specificity">
    <text evidence="5">Expressed by the skin glands.</text>
</comment>
<comment type="similarity">
    <text evidence="2">Belongs to the frog skin active peptide (FSAP) family. Ranatuerin subfamily.</text>
</comment>
<name>RN21_SYLSP</name>
<organism evidence="4">
    <name type="scientific">Sylvirana spinulosa</name>
    <name type="common">Fine-spined frog</name>
    <name type="synonym">Hylarana spinulosa</name>
    <dbReference type="NCBI Taxonomy" id="369515"/>
    <lineage>
        <taxon>Eukaryota</taxon>
        <taxon>Metazoa</taxon>
        <taxon>Chordata</taxon>
        <taxon>Craniata</taxon>
        <taxon>Vertebrata</taxon>
        <taxon>Euteleostomi</taxon>
        <taxon>Amphibia</taxon>
        <taxon>Batrachia</taxon>
        <taxon>Anura</taxon>
        <taxon>Neobatrachia</taxon>
        <taxon>Ranoidea</taxon>
        <taxon>Ranidae</taxon>
        <taxon>Sylvirana</taxon>
    </lineage>
</organism>
<sequence>MFTLKKSLLLIFFLGTISLSLCEKERDADDDEVEVIKQEEKRGFLNTAMNTVTNLAGTLMDKAKCKIRGC</sequence>
<protein>
    <recommendedName>
        <fullName evidence="4">Ranatuerin-2SN1</fullName>
    </recommendedName>
</protein>
<feature type="signal peptide" evidence="2">
    <location>
        <begin position="1"/>
        <end position="22"/>
    </location>
</feature>
<feature type="propeptide" id="PRO_0000439784" description="Removed in mature form" evidence="5">
    <location>
        <begin position="23"/>
        <end position="40"/>
    </location>
</feature>
<feature type="peptide" id="PRO_0000439785" description="Ranatuerin-2SN1" evidence="4">
    <location>
        <begin position="43"/>
        <end position="70"/>
    </location>
</feature>
<feature type="disulfide bond" evidence="1">
    <location>
        <begin position="65"/>
        <end position="70"/>
    </location>
</feature>
<dbReference type="EMBL" id="HQ735166">
    <property type="protein sequence ID" value="ADV36189.1"/>
    <property type="molecule type" value="mRNA"/>
</dbReference>
<dbReference type="SMR" id="E7EKI9"/>
<dbReference type="GO" id="GO:0005576">
    <property type="term" value="C:extracellular region"/>
    <property type="evidence" value="ECO:0007669"/>
    <property type="project" value="UniProtKB-SubCell"/>
</dbReference>
<dbReference type="GO" id="GO:0050829">
    <property type="term" value="P:defense response to Gram-negative bacterium"/>
    <property type="evidence" value="ECO:0000314"/>
    <property type="project" value="UniProtKB"/>
</dbReference>
<dbReference type="GO" id="GO:0044179">
    <property type="term" value="P:hemolysis in another organism"/>
    <property type="evidence" value="ECO:0000314"/>
    <property type="project" value="UniProtKB"/>
</dbReference>
<dbReference type="InterPro" id="IPR012521">
    <property type="entry name" value="Antimicrobial_frog_2"/>
</dbReference>
<dbReference type="InterPro" id="IPR004275">
    <property type="entry name" value="Frog_antimicrobial_propeptide"/>
</dbReference>
<dbReference type="Pfam" id="PF08023">
    <property type="entry name" value="Antimicrobial_2"/>
    <property type="match status" value="1"/>
</dbReference>
<dbReference type="Pfam" id="PF03032">
    <property type="entry name" value="FSAP_sig_propep"/>
    <property type="match status" value="1"/>
</dbReference>
<accession>E7EKI9</accession>